<gene>
    <name evidence="1" type="primary">mltF</name>
    <name type="ordered locus">VV1_0341</name>
</gene>
<evidence type="ECO:0000255" key="1">
    <source>
        <dbReference type="HAMAP-Rule" id="MF_02016"/>
    </source>
</evidence>
<evidence type="ECO:0000256" key="2">
    <source>
        <dbReference type="SAM" id="MobiDB-lite"/>
    </source>
</evidence>
<sequence length="529" mass="59732">MPIFNLHQLRNFLFIIATTLFLSACQIESKPTSELDQIKQRGVLRVGTLNNQLSYYIGPDGQTGLDYELARQFADELGVKLEVKVAFRQAELFPMLKRGDIDLIATGLNQTPRAIKQFRPGPSYYYVSQVVVYKNGALRPRNLKQLVEYQNAKTASEDEAEASNNAAANTLQVVKQSQNVTLLKSLQSDYPELQFTTVSDADNYDLLRRVSTGELRFAISDSIELSLAQRLYPDLATAFEVTEDQPVSWFVRRSPDESLYALMIEFFGNISQSGELARLEEKYIGHIGSFDYVDTRAFIRALDNKLPKWAPLFEQYSAEFDWRLIAALAYQESHWNPLAKSPTGVRGMMMLTLPTAQSVGVKNRLDPEQSIRGGVEYLRRIVARVPESIPQHEKIWFALASYNVGFGHMMDARRLTKRQGGDPDSWGDVKERLPLLRQKKYFSQTRYGYARGDEAKNYVENIRRYYQSIIGHVGQNSLIASDQEGEIQVIPPLENSELVAASDIDAAENEALSPDVGVSQATLTTEVQP</sequence>
<name>MLTF_VIBVU</name>
<keyword id="KW-0998">Cell outer membrane</keyword>
<keyword id="KW-0961">Cell wall biogenesis/degradation</keyword>
<keyword id="KW-0456">Lyase</keyword>
<keyword id="KW-0472">Membrane</keyword>
<keyword id="KW-0732">Signal</keyword>
<proteinExistence type="inferred from homology"/>
<comment type="function">
    <text evidence="1">Murein-degrading enzyme that degrades murein glycan strands and insoluble, high-molecular weight murein sacculi, with the concomitant formation of a 1,6-anhydromuramoyl product. Lytic transglycosylases (LTs) play an integral role in the metabolism of the peptidoglycan (PG) sacculus. Their lytic action creates space within the PG sacculus to allow for its expansion as well as for the insertion of various structures such as secretion systems and flagella.</text>
</comment>
<comment type="catalytic activity">
    <reaction evidence="1">
        <text>Exolytic cleavage of the (1-&gt;4)-beta-glycosidic linkage between N-acetylmuramic acid (MurNAc) and N-acetylglucosamine (GlcNAc) residues in peptidoglycan, from either the reducing or the non-reducing ends of the peptidoglycan chains, with concomitant formation of a 1,6-anhydrobond in the MurNAc residue.</text>
        <dbReference type="EC" id="4.2.2.n1"/>
    </reaction>
</comment>
<comment type="subcellular location">
    <subcellularLocation>
        <location>Cell outer membrane</location>
        <topology>Peripheral membrane protein</topology>
    </subcellularLocation>
    <text evidence="1">Attached to the inner leaflet of the outer membrane.</text>
</comment>
<comment type="domain">
    <text evidence="1">The N-terminal domain does not have lytic activity and probably modulates enzymatic activity. The C-terminal domain is the catalytic active domain.</text>
</comment>
<comment type="similarity">
    <text evidence="1">In the N-terminal section; belongs to the bacterial solute-binding protein 3 family.</text>
</comment>
<comment type="similarity">
    <text evidence="1">In the C-terminal section; belongs to the transglycosylase Slt family.</text>
</comment>
<organism>
    <name type="scientific">Vibrio vulnificus (strain CMCP6)</name>
    <dbReference type="NCBI Taxonomy" id="216895"/>
    <lineage>
        <taxon>Bacteria</taxon>
        <taxon>Pseudomonadati</taxon>
        <taxon>Pseudomonadota</taxon>
        <taxon>Gammaproteobacteria</taxon>
        <taxon>Vibrionales</taxon>
        <taxon>Vibrionaceae</taxon>
        <taxon>Vibrio</taxon>
    </lineage>
</organism>
<feature type="signal peptide" evidence="1">
    <location>
        <begin position="1"/>
        <end position="27"/>
    </location>
</feature>
<feature type="chain" id="PRO_0000353994" description="Membrane-bound lytic murein transglycosylase F">
    <location>
        <begin position="28"/>
        <end position="529"/>
    </location>
</feature>
<feature type="region of interest" description="Non-LT domain" evidence="1">
    <location>
        <begin position="28"/>
        <end position="287"/>
    </location>
</feature>
<feature type="region of interest" description="LT domain" evidence="1">
    <location>
        <begin position="288"/>
        <end position="529"/>
    </location>
</feature>
<feature type="region of interest" description="Disordered" evidence="2">
    <location>
        <begin position="510"/>
        <end position="529"/>
    </location>
</feature>
<feature type="compositionally biased region" description="Polar residues" evidence="2">
    <location>
        <begin position="519"/>
        <end position="529"/>
    </location>
</feature>
<feature type="active site" evidence="1">
    <location>
        <position position="332"/>
    </location>
</feature>
<protein>
    <recommendedName>
        <fullName evidence="1">Membrane-bound lytic murein transglycosylase F</fullName>
        <ecNumber evidence="1">4.2.2.n1</ecNumber>
    </recommendedName>
    <alternativeName>
        <fullName evidence="1">Murein lyase F</fullName>
    </alternativeName>
</protein>
<reference key="1">
    <citation type="submission" date="2002-12" db="EMBL/GenBank/DDBJ databases">
        <title>Complete genome sequence of Vibrio vulnificus CMCP6.</title>
        <authorList>
            <person name="Rhee J.H."/>
            <person name="Kim S.Y."/>
            <person name="Chung S.S."/>
            <person name="Kim J.J."/>
            <person name="Moon Y.H."/>
            <person name="Jeong H."/>
            <person name="Choy H.E."/>
        </authorList>
    </citation>
    <scope>NUCLEOTIDE SEQUENCE [LARGE SCALE GENOMIC DNA]</scope>
    <source>
        <strain>CMCP6</strain>
    </source>
</reference>
<dbReference type="EC" id="4.2.2.n1" evidence="1"/>
<dbReference type="EMBL" id="AE016795">
    <property type="protein sequence ID" value="AAO08868.1"/>
    <property type="molecule type" value="Genomic_DNA"/>
</dbReference>
<dbReference type="RefSeq" id="WP_011078441.1">
    <property type="nucleotide sequence ID" value="NC_004459.3"/>
</dbReference>
<dbReference type="SMR" id="Q8DF80"/>
<dbReference type="CAZy" id="GH23">
    <property type="family name" value="Glycoside Hydrolase Family 23"/>
</dbReference>
<dbReference type="KEGG" id="vvu:VV1_0341"/>
<dbReference type="HOGENOM" id="CLU_027494_0_1_6"/>
<dbReference type="Proteomes" id="UP000002275">
    <property type="component" value="Chromosome 1"/>
</dbReference>
<dbReference type="GO" id="GO:0009279">
    <property type="term" value="C:cell outer membrane"/>
    <property type="evidence" value="ECO:0007669"/>
    <property type="project" value="UniProtKB-SubCell"/>
</dbReference>
<dbReference type="GO" id="GO:0008933">
    <property type="term" value="F:peptidoglycan lytic transglycosylase activity"/>
    <property type="evidence" value="ECO:0007669"/>
    <property type="project" value="UniProtKB-UniRule"/>
</dbReference>
<dbReference type="GO" id="GO:0016998">
    <property type="term" value="P:cell wall macromolecule catabolic process"/>
    <property type="evidence" value="ECO:0007669"/>
    <property type="project" value="UniProtKB-UniRule"/>
</dbReference>
<dbReference type="GO" id="GO:0071555">
    <property type="term" value="P:cell wall organization"/>
    <property type="evidence" value="ECO:0007669"/>
    <property type="project" value="UniProtKB-KW"/>
</dbReference>
<dbReference type="GO" id="GO:0009253">
    <property type="term" value="P:peptidoglycan catabolic process"/>
    <property type="evidence" value="ECO:0007669"/>
    <property type="project" value="TreeGrafter"/>
</dbReference>
<dbReference type="CDD" id="cd13403">
    <property type="entry name" value="MLTF-like"/>
    <property type="match status" value="1"/>
</dbReference>
<dbReference type="CDD" id="cd01009">
    <property type="entry name" value="PBP2_YfhD_N"/>
    <property type="match status" value="1"/>
</dbReference>
<dbReference type="FunFam" id="1.10.530.10:FF:000003">
    <property type="entry name" value="Membrane-bound lytic murein transglycosylase F"/>
    <property type="match status" value="1"/>
</dbReference>
<dbReference type="Gene3D" id="1.10.530.10">
    <property type="match status" value="1"/>
</dbReference>
<dbReference type="Gene3D" id="3.40.190.10">
    <property type="entry name" value="Periplasmic binding protein-like II"/>
    <property type="match status" value="2"/>
</dbReference>
<dbReference type="HAMAP" id="MF_02016">
    <property type="entry name" value="MltF"/>
    <property type="match status" value="1"/>
</dbReference>
<dbReference type="InterPro" id="IPR023346">
    <property type="entry name" value="Lysozyme-like_dom_sf"/>
</dbReference>
<dbReference type="InterPro" id="IPR023703">
    <property type="entry name" value="MltF"/>
</dbReference>
<dbReference type="InterPro" id="IPR001638">
    <property type="entry name" value="Solute-binding_3/MltF_N"/>
</dbReference>
<dbReference type="InterPro" id="IPR000189">
    <property type="entry name" value="Transglyc_AS"/>
</dbReference>
<dbReference type="InterPro" id="IPR008258">
    <property type="entry name" value="Transglycosylase_SLT_dom_1"/>
</dbReference>
<dbReference type="NCBIfam" id="NF008112">
    <property type="entry name" value="PRK10859.1"/>
    <property type="match status" value="1"/>
</dbReference>
<dbReference type="PANTHER" id="PTHR35936">
    <property type="entry name" value="MEMBRANE-BOUND LYTIC MUREIN TRANSGLYCOSYLASE F"/>
    <property type="match status" value="1"/>
</dbReference>
<dbReference type="PANTHER" id="PTHR35936:SF32">
    <property type="entry name" value="MEMBRANE-BOUND LYTIC MUREIN TRANSGLYCOSYLASE F"/>
    <property type="match status" value="1"/>
</dbReference>
<dbReference type="Pfam" id="PF00497">
    <property type="entry name" value="SBP_bac_3"/>
    <property type="match status" value="1"/>
</dbReference>
<dbReference type="Pfam" id="PF01464">
    <property type="entry name" value="SLT"/>
    <property type="match status" value="1"/>
</dbReference>
<dbReference type="SMART" id="SM00062">
    <property type="entry name" value="PBPb"/>
    <property type="match status" value="1"/>
</dbReference>
<dbReference type="SUPFAM" id="SSF53955">
    <property type="entry name" value="Lysozyme-like"/>
    <property type="match status" value="1"/>
</dbReference>
<dbReference type="SUPFAM" id="SSF53850">
    <property type="entry name" value="Periplasmic binding protein-like II"/>
    <property type="match status" value="1"/>
</dbReference>
<dbReference type="PROSITE" id="PS00922">
    <property type="entry name" value="TRANSGLYCOSYLASE"/>
    <property type="match status" value="1"/>
</dbReference>
<accession>Q8DF80</accession>